<sequence length="578" mass="62181">MRRLFLFFALLISGVAQAGTNPFETKPDFLPVGKAFVFTSERLESGETQLYWQIADGYYLYQKRLKFDGLPAEQHPALPEGETHSDEFFGEQQVYRQGLELKIAAGATGQIKVGFQGCADAGLCYPPHTQVVDLGGYLRYRCDRRSTGPSPGQRLQQRALGWSLLVFFGLGLLLAFTPCSLPMLPILAGLIVGSGATPKRGFALATSYVVSMALVYAAMGVLAAMLGANLQALLQNPWLLGSFAAVFVLLALPMFGFFELQLPVAVRDRLENVSRNQRGGSLFGAGVLGALSGLLVGPCMTAPLAGALLYIAQSGNALHGGLILFAMGIGIGVPLLLLVTVGNRFLPKPGAWMNLLKGVFGFLFLATALLMLRPVLDESLWIGLCGGLLLIAAYSAWKQSEGFGRVAHVFGASSLLLGVWGSLLMIGAAGGSDDLMKPLQVYSASNSSSAANPVSHDAFTTIKDPAALQRELDEAQAQGQWVLLDYYADWCVSCKVMEKQVFGKAHVMEALSDVRLLRLDVTADNAASRELLGRYKVPGPPSLLWIGADGIERRSQRITGEVDAGTFLQRWTTTRDAH</sequence>
<comment type="function">
    <text evidence="1">Required to facilitate the formation of correct disulfide bonds in some periplasmic proteins and for the assembly of the periplasmic c-type cytochromes. Acts by transferring electrons from cytoplasmic thioredoxin to the periplasm. This transfer involves a cascade of disulfide bond formation and reduction steps (By similarity).</text>
</comment>
<comment type="catalytic activity">
    <reaction>
        <text>[protein]-dithiol + NAD(+) = [protein]-disulfide + NADH + H(+)</text>
        <dbReference type="Rhea" id="RHEA:18749"/>
        <dbReference type="Rhea" id="RHEA-COMP:10593"/>
        <dbReference type="Rhea" id="RHEA-COMP:10594"/>
        <dbReference type="ChEBI" id="CHEBI:15378"/>
        <dbReference type="ChEBI" id="CHEBI:29950"/>
        <dbReference type="ChEBI" id="CHEBI:50058"/>
        <dbReference type="ChEBI" id="CHEBI:57540"/>
        <dbReference type="ChEBI" id="CHEBI:57945"/>
        <dbReference type="EC" id="1.8.1.8"/>
    </reaction>
</comment>
<comment type="catalytic activity">
    <reaction>
        <text>[protein]-dithiol + NADP(+) = [protein]-disulfide + NADPH + H(+)</text>
        <dbReference type="Rhea" id="RHEA:18753"/>
        <dbReference type="Rhea" id="RHEA-COMP:10593"/>
        <dbReference type="Rhea" id="RHEA-COMP:10594"/>
        <dbReference type="ChEBI" id="CHEBI:15378"/>
        <dbReference type="ChEBI" id="CHEBI:29950"/>
        <dbReference type="ChEBI" id="CHEBI:50058"/>
        <dbReference type="ChEBI" id="CHEBI:57783"/>
        <dbReference type="ChEBI" id="CHEBI:58349"/>
        <dbReference type="EC" id="1.8.1.8"/>
    </reaction>
</comment>
<comment type="subcellular location">
    <subcellularLocation>
        <location evidence="1">Cell inner membrane</location>
        <topology evidence="1">Multi-pass membrane protein</topology>
    </subcellularLocation>
</comment>
<comment type="similarity">
    <text evidence="3">Belongs to the thioredoxin family. DsbD subfamily.</text>
</comment>
<organism>
    <name type="scientific">Pseudomonas sp. (strain JR1 / K1)</name>
    <dbReference type="NCBI Taxonomy" id="269087"/>
    <lineage>
        <taxon>Bacteria</taxon>
        <taxon>Pseudomonadati</taxon>
        <taxon>Pseudomonadota</taxon>
        <taxon>Gammaproteobacteria</taxon>
        <taxon>Pseudomonadales</taxon>
        <taxon>Pseudomonadaceae</taxon>
        <taxon>Pseudomonas</taxon>
    </lineage>
</organism>
<accession>Q9KJZ3</accession>
<gene>
    <name type="primary">dsbD</name>
</gene>
<proteinExistence type="inferred from homology"/>
<feature type="signal peptide" evidence="2">
    <location>
        <begin position="1"/>
        <end position="18"/>
    </location>
</feature>
<feature type="chain" id="PRO_0000007383" description="Thiol:disulfide interchange protein DsbD">
    <location>
        <begin position="19"/>
        <end position="578"/>
    </location>
</feature>
<feature type="topological domain" description="Periplasmic" evidence="2">
    <location>
        <begin position="19"/>
        <end position="158"/>
    </location>
</feature>
<feature type="transmembrane region" description="Helical" evidence="2">
    <location>
        <begin position="159"/>
        <end position="179"/>
    </location>
</feature>
<feature type="topological domain" description="Cytoplasmic" evidence="2">
    <location>
        <begin position="180"/>
        <end position="207"/>
    </location>
</feature>
<feature type="transmembrane region" description="Helical" evidence="2">
    <location>
        <begin position="208"/>
        <end position="228"/>
    </location>
</feature>
<feature type="topological domain" description="Periplasmic" evidence="2">
    <location>
        <begin position="229"/>
        <end position="237"/>
    </location>
</feature>
<feature type="transmembrane region" description="Helical" evidence="2">
    <location>
        <begin position="238"/>
        <end position="258"/>
    </location>
</feature>
<feature type="topological domain" description="Cytoplasmic" evidence="2">
    <location>
        <begin position="259"/>
        <end position="281"/>
    </location>
</feature>
<feature type="transmembrane region" description="Helical" evidence="2">
    <location>
        <begin position="282"/>
        <end position="302"/>
    </location>
</feature>
<feature type="topological domain" description="Periplasmic" evidence="2">
    <location>
        <begin position="303"/>
        <end position="321"/>
    </location>
</feature>
<feature type="transmembrane region" description="Helical" evidence="2">
    <location>
        <begin position="322"/>
        <end position="342"/>
    </location>
</feature>
<feature type="topological domain" description="Cytoplasmic" evidence="2">
    <location>
        <begin position="343"/>
        <end position="351"/>
    </location>
</feature>
<feature type="transmembrane region" description="Helical" evidence="2">
    <location>
        <begin position="352"/>
        <end position="372"/>
    </location>
</feature>
<feature type="topological domain" description="Periplasmic" evidence="2">
    <location>
        <position position="373"/>
    </location>
</feature>
<feature type="transmembrane region" description="Helical" evidence="2">
    <location>
        <begin position="374"/>
        <end position="394"/>
    </location>
</feature>
<feature type="topological domain" description="Cytoplasmic" evidence="2">
    <location>
        <begin position="395"/>
        <end position="408"/>
    </location>
</feature>
<feature type="transmembrane region" description="Helical" evidence="2">
    <location>
        <begin position="409"/>
        <end position="429"/>
    </location>
</feature>
<feature type="topological domain" description="Periplasmic" evidence="2">
    <location>
        <begin position="430"/>
        <end position="578"/>
    </location>
</feature>
<feature type="domain" description="Thioredoxin">
    <location>
        <begin position="433"/>
        <end position="576"/>
    </location>
</feature>
<feature type="disulfide bond" description="Redox-active" evidence="1">
    <location>
        <begin position="118"/>
        <end position="124"/>
    </location>
</feature>
<feature type="disulfide bond" description="Redox-active" evidence="1">
    <location>
        <begin position="179"/>
        <end position="299"/>
    </location>
</feature>
<feature type="disulfide bond" description="Redox-active" evidence="1">
    <location>
        <begin position="491"/>
        <end position="494"/>
    </location>
</feature>
<dbReference type="EC" id="1.8.1.8"/>
<dbReference type="EMBL" id="AF155506">
    <property type="protein sequence ID" value="AAF80267.1"/>
    <property type="molecule type" value="Genomic_DNA"/>
</dbReference>
<dbReference type="SMR" id="Q9KJZ3"/>
<dbReference type="GO" id="GO:0005886">
    <property type="term" value="C:plasma membrane"/>
    <property type="evidence" value="ECO:0007669"/>
    <property type="project" value="UniProtKB-SubCell"/>
</dbReference>
<dbReference type="GO" id="GO:0009055">
    <property type="term" value="F:electron transfer activity"/>
    <property type="evidence" value="ECO:0007669"/>
    <property type="project" value="UniProtKB-UniRule"/>
</dbReference>
<dbReference type="GO" id="GO:0047134">
    <property type="term" value="F:protein-disulfide reductase [NAD(P)H] activity"/>
    <property type="evidence" value="ECO:0007669"/>
    <property type="project" value="UniProtKB-UniRule"/>
</dbReference>
<dbReference type="GO" id="GO:0045454">
    <property type="term" value="P:cell redox homeostasis"/>
    <property type="evidence" value="ECO:0007669"/>
    <property type="project" value="TreeGrafter"/>
</dbReference>
<dbReference type="GO" id="GO:0017004">
    <property type="term" value="P:cytochrome complex assembly"/>
    <property type="evidence" value="ECO:0007669"/>
    <property type="project" value="UniProtKB-UniRule"/>
</dbReference>
<dbReference type="CDD" id="cd02953">
    <property type="entry name" value="DsbDgamma"/>
    <property type="match status" value="1"/>
</dbReference>
<dbReference type="Gene3D" id="3.40.30.10">
    <property type="entry name" value="Glutaredoxin"/>
    <property type="match status" value="1"/>
</dbReference>
<dbReference type="Gene3D" id="2.60.40.1250">
    <property type="entry name" value="Thiol:disulfide interchange protein DsbD, N-terminal domain"/>
    <property type="match status" value="1"/>
</dbReference>
<dbReference type="HAMAP" id="MF_00399">
    <property type="entry name" value="DbsD"/>
    <property type="match status" value="1"/>
</dbReference>
<dbReference type="InterPro" id="IPR003834">
    <property type="entry name" value="Cyt_c_assmbl_TM_dom"/>
</dbReference>
<dbReference type="InterPro" id="IPR035671">
    <property type="entry name" value="DsbD_gamma"/>
</dbReference>
<dbReference type="InterPro" id="IPR028250">
    <property type="entry name" value="DsbDN"/>
</dbReference>
<dbReference type="InterPro" id="IPR036929">
    <property type="entry name" value="DsbDN_sf"/>
</dbReference>
<dbReference type="InterPro" id="IPR022910">
    <property type="entry name" value="Thiol_diS_interchange_DbsD"/>
</dbReference>
<dbReference type="InterPro" id="IPR036249">
    <property type="entry name" value="Thioredoxin-like_sf"/>
</dbReference>
<dbReference type="InterPro" id="IPR017937">
    <property type="entry name" value="Thioredoxin_CS"/>
</dbReference>
<dbReference type="InterPro" id="IPR013766">
    <property type="entry name" value="Thioredoxin_domain"/>
</dbReference>
<dbReference type="NCBIfam" id="NF001419">
    <property type="entry name" value="PRK00293.1"/>
    <property type="match status" value="1"/>
</dbReference>
<dbReference type="PANTHER" id="PTHR32234">
    <property type="entry name" value="THIOL:DISULFIDE INTERCHANGE PROTEIN DSBD"/>
    <property type="match status" value="1"/>
</dbReference>
<dbReference type="PANTHER" id="PTHR32234:SF0">
    <property type="entry name" value="THIOL:DISULFIDE INTERCHANGE PROTEIN DSBD"/>
    <property type="match status" value="1"/>
</dbReference>
<dbReference type="Pfam" id="PF11412">
    <property type="entry name" value="DsbD_N"/>
    <property type="match status" value="1"/>
</dbReference>
<dbReference type="Pfam" id="PF02683">
    <property type="entry name" value="DsbD_TM"/>
    <property type="match status" value="1"/>
</dbReference>
<dbReference type="Pfam" id="PF13899">
    <property type="entry name" value="Thioredoxin_7"/>
    <property type="match status" value="1"/>
</dbReference>
<dbReference type="SUPFAM" id="SSF74863">
    <property type="entry name" value="Thiol:disulfide interchange protein DsbD, N-terminal domain (DsbD-alpha)"/>
    <property type="match status" value="1"/>
</dbReference>
<dbReference type="SUPFAM" id="SSF52833">
    <property type="entry name" value="Thioredoxin-like"/>
    <property type="match status" value="1"/>
</dbReference>
<dbReference type="PROSITE" id="PS00194">
    <property type="entry name" value="THIOREDOXIN_1"/>
    <property type="match status" value="1"/>
</dbReference>
<dbReference type="PROSITE" id="PS51352">
    <property type="entry name" value="THIOREDOXIN_2"/>
    <property type="match status" value="1"/>
</dbReference>
<name>DSBD_PSEUK</name>
<protein>
    <recommendedName>
        <fullName>Thiol:disulfide interchange protein DsbD</fullName>
        <ecNumber>1.8.1.8</ecNumber>
    </recommendedName>
    <alternativeName>
        <fullName>Protein-disulfide reductase</fullName>
        <shortName>Disulfide reductase</shortName>
    </alternativeName>
</protein>
<reference key="1">
    <citation type="submission" date="1999-06" db="EMBL/GenBank/DDBJ databases">
        <title>The two-component signal transduction system ArmRS is involved in deregulation of 3-isopropylcatechol dioxygenase in the mutant strain Pseudomonas sp. K1.</title>
        <authorList>
            <person name="Johann A."/>
            <person name="Michel J."/>
            <person name="Averhoff B."/>
            <person name="Gottschalk G."/>
        </authorList>
    </citation>
    <scope>NUCLEOTIDE SEQUENCE [GENOMIC DNA]</scope>
</reference>
<keyword id="KW-0997">Cell inner membrane</keyword>
<keyword id="KW-1003">Cell membrane</keyword>
<keyword id="KW-0201">Cytochrome c-type biogenesis</keyword>
<keyword id="KW-1015">Disulfide bond</keyword>
<keyword id="KW-0249">Electron transport</keyword>
<keyword id="KW-0472">Membrane</keyword>
<keyword id="KW-0520">NAD</keyword>
<keyword id="KW-0560">Oxidoreductase</keyword>
<keyword id="KW-0676">Redox-active center</keyword>
<keyword id="KW-0732">Signal</keyword>
<keyword id="KW-0812">Transmembrane</keyword>
<keyword id="KW-1133">Transmembrane helix</keyword>
<keyword id="KW-0813">Transport</keyword>
<evidence type="ECO:0000250" key="1"/>
<evidence type="ECO:0000255" key="2"/>
<evidence type="ECO:0000305" key="3"/>